<feature type="chain" id="PRO_0000088377" description="UPF0053 protein bbp_300">
    <location>
        <begin position="1"/>
        <end position="519"/>
    </location>
</feature>
<feature type="transmembrane region" description="Helical" evidence="1">
    <location>
        <begin position="13"/>
        <end position="35"/>
    </location>
</feature>
<feature type="transmembrane region" description="Helical" evidence="1">
    <location>
        <begin position="48"/>
        <end position="70"/>
    </location>
</feature>
<feature type="transmembrane region" description="Helical" evidence="1">
    <location>
        <begin position="80"/>
        <end position="102"/>
    </location>
</feature>
<feature type="transmembrane region" description="Helical" evidence="1">
    <location>
        <begin position="123"/>
        <end position="145"/>
    </location>
</feature>
<feature type="transmembrane region" description="Helical" evidence="1">
    <location>
        <begin position="150"/>
        <end position="172"/>
    </location>
</feature>
<feature type="transmembrane region" description="Helical" evidence="1">
    <location>
        <begin position="185"/>
        <end position="207"/>
    </location>
</feature>
<feature type="transmembrane region" description="Helical" evidence="1">
    <location>
        <begin position="212"/>
        <end position="231"/>
    </location>
</feature>
<feature type="domain" description="CBS 1" evidence="2">
    <location>
        <begin position="311"/>
        <end position="373"/>
    </location>
</feature>
<feature type="domain" description="CBS 2" evidence="2">
    <location>
        <begin position="374"/>
        <end position="434"/>
    </location>
</feature>
<name>Y300_BUCBP</name>
<comment type="subcellular location">
    <subcellularLocation>
        <location evidence="3">Cell membrane</location>
        <topology evidence="3">Multi-pass membrane protein</topology>
    </subcellularLocation>
</comment>
<comment type="similarity">
    <text evidence="3">Belongs to the UPF0053 family.</text>
</comment>
<organism>
    <name type="scientific">Buchnera aphidicola subsp. Baizongia pistaciae (strain Bp)</name>
    <dbReference type="NCBI Taxonomy" id="224915"/>
    <lineage>
        <taxon>Bacteria</taxon>
        <taxon>Pseudomonadati</taxon>
        <taxon>Pseudomonadota</taxon>
        <taxon>Gammaproteobacteria</taxon>
        <taxon>Enterobacterales</taxon>
        <taxon>Erwiniaceae</taxon>
        <taxon>Buchnera</taxon>
    </lineage>
</organism>
<reference key="1">
    <citation type="journal article" date="2003" name="Proc. Natl. Acad. Sci. U.S.A.">
        <title>Reductive genome evolution in Buchnera aphidicola.</title>
        <authorList>
            <person name="van Ham R.C.H.J."/>
            <person name="Kamerbeek J."/>
            <person name="Palacios C."/>
            <person name="Rausell C."/>
            <person name="Abascal F."/>
            <person name="Bastolla U."/>
            <person name="Fernandez J.M."/>
            <person name="Jimenez L."/>
            <person name="Postigo M."/>
            <person name="Silva F.J."/>
            <person name="Tamames J."/>
            <person name="Viguera E."/>
            <person name="Latorre A."/>
            <person name="Valencia A."/>
            <person name="Moran F."/>
            <person name="Moya A."/>
        </authorList>
    </citation>
    <scope>NUCLEOTIDE SEQUENCE [LARGE SCALE GENOMIC DNA]</scope>
    <source>
        <strain>Bp</strain>
    </source>
</reference>
<protein>
    <recommendedName>
        <fullName>UPF0053 protein bbp_300</fullName>
    </recommendedName>
</protein>
<gene>
    <name type="ordered locus">bbp_300</name>
</gene>
<accession>Q89AI6</accession>
<dbReference type="EMBL" id="AE016826">
    <property type="protein sequence ID" value="AAO27025.1"/>
    <property type="molecule type" value="Genomic_DNA"/>
</dbReference>
<dbReference type="RefSeq" id="WP_011091426.1">
    <property type="nucleotide sequence ID" value="NC_004545.1"/>
</dbReference>
<dbReference type="SMR" id="Q89AI6"/>
<dbReference type="STRING" id="224915.bbp_300"/>
<dbReference type="KEGG" id="bab:bbp_300"/>
<dbReference type="eggNOG" id="COG1253">
    <property type="taxonomic scope" value="Bacteria"/>
</dbReference>
<dbReference type="HOGENOM" id="CLU_015237_0_0_6"/>
<dbReference type="OrthoDB" id="9805314at2"/>
<dbReference type="Proteomes" id="UP000000601">
    <property type="component" value="Chromosome"/>
</dbReference>
<dbReference type="GO" id="GO:0005886">
    <property type="term" value="C:plasma membrane"/>
    <property type="evidence" value="ECO:0007669"/>
    <property type="project" value="UniProtKB-SubCell"/>
</dbReference>
<dbReference type="GO" id="GO:0050660">
    <property type="term" value="F:flavin adenine dinucleotide binding"/>
    <property type="evidence" value="ECO:0007669"/>
    <property type="project" value="InterPro"/>
</dbReference>
<dbReference type="CDD" id="cd04590">
    <property type="entry name" value="CBS_pair_CorC_HlyC_assoc"/>
    <property type="match status" value="1"/>
</dbReference>
<dbReference type="FunFam" id="3.10.580.10:FF:000008">
    <property type="entry name" value="Integral membrane protein TerC"/>
    <property type="match status" value="1"/>
</dbReference>
<dbReference type="Gene3D" id="3.30.465.10">
    <property type="match status" value="1"/>
</dbReference>
<dbReference type="Gene3D" id="3.10.580.10">
    <property type="entry name" value="CBS-domain"/>
    <property type="match status" value="1"/>
</dbReference>
<dbReference type="InterPro" id="IPR046342">
    <property type="entry name" value="CBS_dom_sf"/>
</dbReference>
<dbReference type="InterPro" id="IPR036318">
    <property type="entry name" value="FAD-bd_PCMH-like_sf"/>
</dbReference>
<dbReference type="InterPro" id="IPR016169">
    <property type="entry name" value="FAD-bd_PCMH_sub2"/>
</dbReference>
<dbReference type="InterPro" id="IPR005496">
    <property type="entry name" value="Integral_membrane_TerC"/>
</dbReference>
<dbReference type="InterPro" id="IPR044751">
    <property type="entry name" value="Ion_transp-like_CBS"/>
</dbReference>
<dbReference type="InterPro" id="IPR005170">
    <property type="entry name" value="Transptr-assoc_dom"/>
</dbReference>
<dbReference type="PANTHER" id="PTHR22777">
    <property type="entry name" value="HEMOLYSIN-RELATED"/>
    <property type="match status" value="1"/>
</dbReference>
<dbReference type="PANTHER" id="PTHR22777:SF15">
    <property type="entry name" value="UPF0053 INNER MEMBRANE PROTEIN YOAE"/>
    <property type="match status" value="1"/>
</dbReference>
<dbReference type="Pfam" id="PF03471">
    <property type="entry name" value="CorC_HlyC"/>
    <property type="match status" value="1"/>
</dbReference>
<dbReference type="Pfam" id="PF03741">
    <property type="entry name" value="TerC"/>
    <property type="match status" value="1"/>
</dbReference>
<dbReference type="SMART" id="SM01091">
    <property type="entry name" value="CorC_HlyC"/>
    <property type="match status" value="1"/>
</dbReference>
<dbReference type="SUPFAM" id="SSF54631">
    <property type="entry name" value="CBS-domain pair"/>
    <property type="match status" value="1"/>
</dbReference>
<dbReference type="SUPFAM" id="SSF56176">
    <property type="entry name" value="FAD-binding/transporter-associated domain-like"/>
    <property type="match status" value="1"/>
</dbReference>
<dbReference type="PROSITE" id="PS51371">
    <property type="entry name" value="CBS"/>
    <property type="match status" value="2"/>
</dbReference>
<sequence length="519" mass="58364">MELFLDPSTWAGLLTLIILEIVLGIDNLVFVAILSEKLPPCKQDKARLIGLSFALFMRLGLLALMSWMVTLTSEIISNKYFSFSGRDLILLFGGLFLLFKATIELHERLDNDIQKNENNKHYAGFWTIVIQIVILDSIFSLDAIITAVGTINNLPIMMIAVVIAMVLMLIASKPLTKFINLHQTVVVLCLSFLLMIGCNLVSEALGFYVPKGYLYAAIGFSIIIEIFNQIARRNFMLHQSRRPMRQRAAEAILRLMIGDQFRNTTTNISTKNKDKEKIRNRTTDTESFKEEERYMINGVLTLAARSIRSIMTPRNEISWVNIYQPKNKIRSQLLDTPHSLFPVCKGQLDEVIGIVRAKELLVALERTINIIDFSSTTLPIIIPDTLDPINLLGVLRRAKGSLVIVTNEFGAVQGLITPLDVLEAIAGEFPDADETPDIIFEKDSWLVKGGTDLHSLQQCLNITNLIKQENSYASLAGLLIAQKGQLPLPGETIVIPPLRFYILEATQYRINLVRITKQH</sequence>
<evidence type="ECO:0000255" key="1"/>
<evidence type="ECO:0000255" key="2">
    <source>
        <dbReference type="PROSITE-ProRule" id="PRU00703"/>
    </source>
</evidence>
<evidence type="ECO:0000305" key="3"/>
<keyword id="KW-0129">CBS domain</keyword>
<keyword id="KW-1003">Cell membrane</keyword>
<keyword id="KW-0472">Membrane</keyword>
<keyword id="KW-1185">Reference proteome</keyword>
<keyword id="KW-0677">Repeat</keyword>
<keyword id="KW-0812">Transmembrane</keyword>
<keyword id="KW-1133">Transmembrane helix</keyword>
<proteinExistence type="inferred from homology"/>